<proteinExistence type="evidence at protein level"/>
<sequence>MSEAENKLPFIPEEWSNAASSVSCSSLQPVIALVCGPKNSGKSTFSRNLVEVLLQRYKRVAYLDTDVGQPEFTAPGFLSLTIVDKSILESDWTVPCVKTPERCFFYGDVSSKRDPKAYLRYVYTLFDYYQLHFCKSSENKTELPLVINTPGWVKGIGYELLVDVLRYVSPSHVVKINISAYNKNLPAGLFWLDGNDDETAHLIEIQSAYQDRYNQSILIHKDARLMRDMRIIAYFRQCFKGKEVNTIKELTHELASHIPYEVPISSLTINHLHCQIPSSEVYYSLNASIVGLGISTEVFEDLPSCVGLGIVRGIDTERGILYVITPVPENLVEKVDLLLQGYIQLPTCLLEVKDYRSPYLSANVLAST</sequence>
<evidence type="ECO:0000250" key="1"/>
<evidence type="ECO:0000255" key="2"/>
<evidence type="ECO:0000303" key="3">
    <source>
    </source>
</evidence>
<evidence type="ECO:0000305" key="4"/>
<keyword id="KW-0025">Alternative splicing</keyword>
<keyword id="KW-0067">ATP-binding</keyword>
<keyword id="KW-0418">Kinase</keyword>
<keyword id="KW-0547">Nucleotide-binding</keyword>
<keyword id="KW-0539">Nucleus</keyword>
<keyword id="KW-1185">Reference proteome</keyword>
<keyword id="KW-0698">rRNA processing</keyword>
<keyword id="KW-0808">Transferase</keyword>
<reference key="1">
    <citation type="journal article" date="2000" name="Nature">
        <title>Sequence and analysis of chromosome 5 of the plant Arabidopsis thaliana.</title>
        <authorList>
            <person name="Tabata S."/>
            <person name="Kaneko T."/>
            <person name="Nakamura Y."/>
            <person name="Kotani H."/>
            <person name="Kato T."/>
            <person name="Asamizu E."/>
            <person name="Miyajima N."/>
            <person name="Sasamoto S."/>
            <person name="Kimura T."/>
            <person name="Hosouchi T."/>
            <person name="Kawashima K."/>
            <person name="Kohara M."/>
            <person name="Matsumoto M."/>
            <person name="Matsuno A."/>
            <person name="Muraki A."/>
            <person name="Nakayama S."/>
            <person name="Nakazaki N."/>
            <person name="Naruo K."/>
            <person name="Okumura S."/>
            <person name="Shinpo S."/>
            <person name="Takeuchi C."/>
            <person name="Wada T."/>
            <person name="Watanabe A."/>
            <person name="Yamada M."/>
            <person name="Yasuda M."/>
            <person name="Sato S."/>
            <person name="de la Bastide M."/>
            <person name="Huang E."/>
            <person name="Spiegel L."/>
            <person name="Gnoj L."/>
            <person name="O'Shaughnessy A."/>
            <person name="Preston R."/>
            <person name="Habermann K."/>
            <person name="Murray J."/>
            <person name="Johnson D."/>
            <person name="Rohlfing T."/>
            <person name="Nelson J."/>
            <person name="Stoneking T."/>
            <person name="Pepin K."/>
            <person name="Spieth J."/>
            <person name="Sekhon M."/>
            <person name="Armstrong J."/>
            <person name="Becker M."/>
            <person name="Belter E."/>
            <person name="Cordum H."/>
            <person name="Cordes M."/>
            <person name="Courtney L."/>
            <person name="Courtney W."/>
            <person name="Dante M."/>
            <person name="Du H."/>
            <person name="Edwards J."/>
            <person name="Fryman J."/>
            <person name="Haakensen B."/>
            <person name="Lamar E."/>
            <person name="Latreille P."/>
            <person name="Leonard S."/>
            <person name="Meyer R."/>
            <person name="Mulvaney E."/>
            <person name="Ozersky P."/>
            <person name="Riley A."/>
            <person name="Strowmatt C."/>
            <person name="Wagner-McPherson C."/>
            <person name="Wollam A."/>
            <person name="Yoakum M."/>
            <person name="Bell M."/>
            <person name="Dedhia N."/>
            <person name="Parnell L."/>
            <person name="Shah R."/>
            <person name="Rodriguez M."/>
            <person name="Hoon See L."/>
            <person name="Vil D."/>
            <person name="Baker J."/>
            <person name="Kirchoff K."/>
            <person name="Toth K."/>
            <person name="King L."/>
            <person name="Bahret A."/>
            <person name="Miller B."/>
            <person name="Marra M.A."/>
            <person name="Martienssen R."/>
            <person name="McCombie W.R."/>
            <person name="Wilson R.K."/>
            <person name="Murphy G."/>
            <person name="Bancroft I."/>
            <person name="Volckaert G."/>
            <person name="Wambutt R."/>
            <person name="Duesterhoeft A."/>
            <person name="Stiekema W."/>
            <person name="Pohl T."/>
            <person name="Entian K.-D."/>
            <person name="Terryn N."/>
            <person name="Hartley N."/>
            <person name="Bent E."/>
            <person name="Johnson S."/>
            <person name="Langham S.-A."/>
            <person name="McCullagh B."/>
            <person name="Robben J."/>
            <person name="Grymonprez B."/>
            <person name="Zimmermann W."/>
            <person name="Ramsperger U."/>
            <person name="Wedler H."/>
            <person name="Balke K."/>
            <person name="Wedler E."/>
            <person name="Peters S."/>
            <person name="van Staveren M."/>
            <person name="Dirkse W."/>
            <person name="Mooijman P."/>
            <person name="Klein Lankhorst R."/>
            <person name="Weitzenegger T."/>
            <person name="Bothe G."/>
            <person name="Rose M."/>
            <person name="Hauf J."/>
            <person name="Berneiser S."/>
            <person name="Hempel S."/>
            <person name="Feldpausch M."/>
            <person name="Lamberth S."/>
            <person name="Villarroel R."/>
            <person name="Gielen J."/>
            <person name="Ardiles W."/>
            <person name="Bents O."/>
            <person name="Lemcke K."/>
            <person name="Kolesov G."/>
            <person name="Mayer K.F.X."/>
            <person name="Rudd S."/>
            <person name="Schoof H."/>
            <person name="Schueller C."/>
            <person name="Zaccaria P."/>
            <person name="Mewes H.-W."/>
            <person name="Bevan M."/>
            <person name="Fransz P.F."/>
        </authorList>
    </citation>
    <scope>NUCLEOTIDE SEQUENCE [LARGE SCALE GENOMIC DNA]</scope>
    <source>
        <strain>cv. Columbia</strain>
    </source>
</reference>
<reference key="2">
    <citation type="journal article" date="2017" name="Plant J.">
        <title>Araport11: a complete reannotation of the Arabidopsis thaliana reference genome.</title>
        <authorList>
            <person name="Cheng C.Y."/>
            <person name="Krishnakumar V."/>
            <person name="Chan A.P."/>
            <person name="Thibaud-Nissen F."/>
            <person name="Schobel S."/>
            <person name="Town C.D."/>
        </authorList>
    </citation>
    <scope>GENOME REANNOTATION</scope>
    <source>
        <strain>cv. Columbia</strain>
    </source>
</reference>
<reference key="3">
    <citation type="journal article" date="2003" name="Science">
        <title>Empirical analysis of transcriptional activity in the Arabidopsis genome.</title>
        <authorList>
            <person name="Yamada K."/>
            <person name="Lim J."/>
            <person name="Dale J.M."/>
            <person name="Chen H."/>
            <person name="Shinn P."/>
            <person name="Palm C.J."/>
            <person name="Southwick A.M."/>
            <person name="Wu H.C."/>
            <person name="Kim C.J."/>
            <person name="Nguyen M."/>
            <person name="Pham P.K."/>
            <person name="Cheuk R.F."/>
            <person name="Karlin-Newmann G."/>
            <person name="Liu S.X."/>
            <person name="Lam B."/>
            <person name="Sakano H."/>
            <person name="Wu T."/>
            <person name="Yu G."/>
            <person name="Miranda M."/>
            <person name="Quach H.L."/>
            <person name="Tripp M."/>
            <person name="Chang C.H."/>
            <person name="Lee J.M."/>
            <person name="Toriumi M.J."/>
            <person name="Chan M.M."/>
            <person name="Tang C.C."/>
            <person name="Onodera C.S."/>
            <person name="Deng J.M."/>
            <person name="Akiyama K."/>
            <person name="Ansari Y."/>
            <person name="Arakawa T."/>
            <person name="Banh J."/>
            <person name="Banno F."/>
            <person name="Bowser L."/>
            <person name="Brooks S.Y."/>
            <person name="Carninci P."/>
            <person name="Chao Q."/>
            <person name="Choy N."/>
            <person name="Enju A."/>
            <person name="Goldsmith A.D."/>
            <person name="Gurjal M."/>
            <person name="Hansen N.F."/>
            <person name="Hayashizaki Y."/>
            <person name="Johnson-Hopson C."/>
            <person name="Hsuan V.W."/>
            <person name="Iida K."/>
            <person name="Karnes M."/>
            <person name="Khan S."/>
            <person name="Koesema E."/>
            <person name="Ishida J."/>
            <person name="Jiang P.X."/>
            <person name="Jones T."/>
            <person name="Kawai J."/>
            <person name="Kamiya A."/>
            <person name="Meyers C."/>
            <person name="Nakajima M."/>
            <person name="Narusaka M."/>
            <person name="Seki M."/>
            <person name="Sakurai T."/>
            <person name="Satou M."/>
            <person name="Tamse R."/>
            <person name="Vaysberg M."/>
            <person name="Wallender E.K."/>
            <person name="Wong C."/>
            <person name="Yamamura Y."/>
            <person name="Yuan S."/>
            <person name="Shinozaki K."/>
            <person name="Davis R.W."/>
            <person name="Theologis A."/>
            <person name="Ecker J.R."/>
        </authorList>
    </citation>
    <scope>NUCLEOTIDE SEQUENCE [LARGE SCALE MRNA] (ISOFORMS 1 AND 2)</scope>
    <source>
        <strain>cv. Columbia</strain>
    </source>
</reference>
<accession>Q8VYP6</accession>
<accession>Q945L9</accession>
<accession>Q9LEU0</accession>
<feature type="chain" id="PRO_0000403781" description="Polynucleotide 5'-hydroxyl-kinase NOL9">
    <location>
        <begin position="1"/>
        <end position="368"/>
    </location>
</feature>
<feature type="binding site" evidence="2">
    <location>
        <begin position="36"/>
        <end position="43"/>
    </location>
    <ligand>
        <name>ATP</name>
        <dbReference type="ChEBI" id="CHEBI:30616"/>
    </ligand>
</feature>
<feature type="splice variant" id="VSP_040448" description="In isoform 2." evidence="3">
    <original>IVRGIDTER</original>
    <variation>KFLFIHCNQ</variation>
    <location>
        <begin position="310"/>
        <end position="318"/>
    </location>
</feature>
<feature type="splice variant" id="VSP_040449" description="In isoform 2." evidence="3">
    <location>
        <begin position="319"/>
        <end position="368"/>
    </location>
</feature>
<dbReference type="EC" id="2.7.1.-"/>
<dbReference type="EMBL" id="AL365234">
    <property type="protein sequence ID" value="CAB96856.1"/>
    <property type="status" value="ALT_SEQ"/>
    <property type="molecule type" value="Genomic_DNA"/>
</dbReference>
<dbReference type="EMBL" id="CP002688">
    <property type="protein sequence ID" value="AED91620.1"/>
    <property type="molecule type" value="Genomic_DNA"/>
</dbReference>
<dbReference type="EMBL" id="CP002688">
    <property type="protein sequence ID" value="AED91621.1"/>
    <property type="molecule type" value="Genomic_DNA"/>
</dbReference>
<dbReference type="EMBL" id="CP002688">
    <property type="protein sequence ID" value="AED91622.1"/>
    <property type="molecule type" value="Genomic_DNA"/>
</dbReference>
<dbReference type="EMBL" id="CP002688">
    <property type="protein sequence ID" value="ANM68558.1"/>
    <property type="molecule type" value="Genomic_DNA"/>
</dbReference>
<dbReference type="EMBL" id="AY070379">
    <property type="protein sequence ID" value="AAL49875.1"/>
    <property type="molecule type" value="mRNA"/>
</dbReference>
<dbReference type="EMBL" id="AY096562">
    <property type="protein sequence ID" value="AAM20212.1"/>
    <property type="molecule type" value="mRNA"/>
</dbReference>
<dbReference type="EMBL" id="AF412075">
    <property type="protein sequence ID" value="AAL06528.1"/>
    <property type="molecule type" value="mRNA"/>
</dbReference>
<dbReference type="PIR" id="T50810">
    <property type="entry name" value="T50810"/>
</dbReference>
<dbReference type="RefSeq" id="NP_001318534.1">
    <molecule id="Q8VYP6-1"/>
    <property type="nucleotide sequence ID" value="NM_001343144.1"/>
</dbReference>
<dbReference type="RefSeq" id="NP_001330301.1">
    <molecule id="Q8VYP6-1"/>
    <property type="nucleotide sequence ID" value="NM_001343145.1"/>
</dbReference>
<dbReference type="RefSeq" id="NP_568243.1">
    <molecule id="Q8VYP6-2"/>
    <property type="nucleotide sequence ID" value="NM_121139.1"/>
</dbReference>
<dbReference type="RefSeq" id="NP_850805.1">
    <molecule id="Q8VYP6-1"/>
    <property type="nucleotide sequence ID" value="NM_180474.2"/>
</dbReference>
<dbReference type="SMR" id="Q8VYP6"/>
<dbReference type="BioGRID" id="16246">
    <property type="interactions" value="3"/>
</dbReference>
<dbReference type="FunCoup" id="Q8VYP6">
    <property type="interactions" value="3988"/>
</dbReference>
<dbReference type="IntAct" id="Q8VYP6">
    <property type="interactions" value="3"/>
</dbReference>
<dbReference type="STRING" id="3702.Q8VYP6"/>
<dbReference type="PaxDb" id="3702-AT5G11010.2"/>
<dbReference type="ProteomicsDB" id="251164">
    <molecule id="Q8VYP6-1"/>
</dbReference>
<dbReference type="EnsemblPlants" id="AT5G11010.1">
    <molecule id="Q8VYP6-2"/>
    <property type="protein sequence ID" value="AT5G11010.1"/>
    <property type="gene ID" value="AT5G11010"/>
</dbReference>
<dbReference type="EnsemblPlants" id="AT5G11010.2">
    <molecule id="Q8VYP6-1"/>
    <property type="protein sequence ID" value="AT5G11010.2"/>
    <property type="gene ID" value="AT5G11010"/>
</dbReference>
<dbReference type="EnsemblPlants" id="AT5G11010.3">
    <molecule id="Q8VYP6-1"/>
    <property type="protein sequence ID" value="AT5G11010.3"/>
    <property type="gene ID" value="AT5G11010"/>
</dbReference>
<dbReference type="EnsemblPlants" id="AT5G11010.4">
    <molecule id="Q8VYP6-1"/>
    <property type="protein sequence ID" value="AT5G11010.4"/>
    <property type="gene ID" value="AT5G11010"/>
</dbReference>
<dbReference type="GeneID" id="830968"/>
<dbReference type="Gramene" id="AT5G11010.1">
    <molecule id="Q8VYP6-2"/>
    <property type="protein sequence ID" value="AT5G11010.1"/>
    <property type="gene ID" value="AT5G11010"/>
</dbReference>
<dbReference type="Gramene" id="AT5G11010.2">
    <molecule id="Q8VYP6-1"/>
    <property type="protein sequence ID" value="AT5G11010.2"/>
    <property type="gene ID" value="AT5G11010"/>
</dbReference>
<dbReference type="Gramene" id="AT5G11010.3">
    <molecule id="Q8VYP6-1"/>
    <property type="protein sequence ID" value="AT5G11010.3"/>
    <property type="gene ID" value="AT5G11010"/>
</dbReference>
<dbReference type="Gramene" id="AT5G11010.4">
    <molecule id="Q8VYP6-1"/>
    <property type="protein sequence ID" value="AT5G11010.4"/>
    <property type="gene ID" value="AT5G11010"/>
</dbReference>
<dbReference type="KEGG" id="ath:AT5G11010"/>
<dbReference type="Araport" id="AT5G11010"/>
<dbReference type="TAIR" id="AT5G11010"/>
<dbReference type="eggNOG" id="KOG2750">
    <property type="taxonomic scope" value="Eukaryota"/>
</dbReference>
<dbReference type="HOGENOM" id="CLU_021128_1_0_1"/>
<dbReference type="InParanoid" id="Q8VYP6"/>
<dbReference type="OMA" id="CGPKNAG"/>
<dbReference type="OrthoDB" id="2405412at2759"/>
<dbReference type="PhylomeDB" id="Q8VYP6"/>
<dbReference type="CD-CODE" id="4299E36E">
    <property type="entry name" value="Nucleolus"/>
</dbReference>
<dbReference type="PRO" id="PR:Q8VYP6"/>
<dbReference type="Proteomes" id="UP000006548">
    <property type="component" value="Chromosome 5"/>
</dbReference>
<dbReference type="ExpressionAtlas" id="Q8VYP6">
    <property type="expression patterns" value="baseline and differential"/>
</dbReference>
<dbReference type="GO" id="GO:0005730">
    <property type="term" value="C:nucleolus"/>
    <property type="evidence" value="ECO:0007669"/>
    <property type="project" value="UniProtKB-SubCell"/>
</dbReference>
<dbReference type="GO" id="GO:0005524">
    <property type="term" value="F:ATP binding"/>
    <property type="evidence" value="ECO:0007669"/>
    <property type="project" value="UniProtKB-KW"/>
</dbReference>
<dbReference type="GO" id="GO:0051731">
    <property type="term" value="F:polynucleotide 5'-hydroxyl-kinase activity"/>
    <property type="evidence" value="ECO:0000250"/>
    <property type="project" value="UniProtKB"/>
</dbReference>
<dbReference type="GO" id="GO:0006364">
    <property type="term" value="P:rRNA processing"/>
    <property type="evidence" value="ECO:0000250"/>
    <property type="project" value="UniProtKB"/>
</dbReference>
<dbReference type="CDD" id="cd01983">
    <property type="entry name" value="SIMIBI"/>
    <property type="match status" value="1"/>
</dbReference>
<dbReference type="FunFam" id="3.40.50.300:FF:001377">
    <property type="entry name" value="Nucleolar protein 9"/>
    <property type="match status" value="1"/>
</dbReference>
<dbReference type="Gene3D" id="3.40.50.300">
    <property type="entry name" value="P-loop containing nucleotide triphosphate hydrolases"/>
    <property type="match status" value="1"/>
</dbReference>
<dbReference type="InterPro" id="IPR045116">
    <property type="entry name" value="Clp1/Grc3"/>
</dbReference>
<dbReference type="InterPro" id="IPR032319">
    <property type="entry name" value="CLP1_P"/>
</dbReference>
<dbReference type="InterPro" id="IPR027417">
    <property type="entry name" value="P-loop_NTPase"/>
</dbReference>
<dbReference type="PANTHER" id="PTHR12755">
    <property type="entry name" value="CLEAVAGE/POLYADENYLATION FACTOR IA SUBUNIT CLP1P"/>
    <property type="match status" value="1"/>
</dbReference>
<dbReference type="PANTHER" id="PTHR12755:SF3">
    <property type="entry name" value="POLYNUCLEOTIDE 5'-HYDROXYL-KINASE NOL9"/>
    <property type="match status" value="1"/>
</dbReference>
<dbReference type="Pfam" id="PF16575">
    <property type="entry name" value="CLP1_P"/>
    <property type="match status" value="1"/>
</dbReference>
<dbReference type="Pfam" id="PF25467">
    <property type="entry name" value="NOL9_C"/>
    <property type="match status" value="1"/>
</dbReference>
<dbReference type="SUPFAM" id="SSF52540">
    <property type="entry name" value="P-loop containing nucleoside triphosphate hydrolases"/>
    <property type="match status" value="1"/>
</dbReference>
<gene>
    <name type="ordered locus">At5g11010</name>
    <name type="ORF">T30N20.280</name>
</gene>
<organism>
    <name type="scientific">Arabidopsis thaliana</name>
    <name type="common">Mouse-ear cress</name>
    <dbReference type="NCBI Taxonomy" id="3702"/>
    <lineage>
        <taxon>Eukaryota</taxon>
        <taxon>Viridiplantae</taxon>
        <taxon>Streptophyta</taxon>
        <taxon>Embryophyta</taxon>
        <taxon>Tracheophyta</taxon>
        <taxon>Spermatophyta</taxon>
        <taxon>Magnoliopsida</taxon>
        <taxon>eudicotyledons</taxon>
        <taxon>Gunneridae</taxon>
        <taxon>Pentapetalae</taxon>
        <taxon>rosids</taxon>
        <taxon>malvids</taxon>
        <taxon>Brassicales</taxon>
        <taxon>Brassicaceae</taxon>
        <taxon>Camelineae</taxon>
        <taxon>Arabidopsis</taxon>
    </lineage>
</organism>
<comment type="function">
    <text evidence="1">Polynucleotide 5'-kinase involved in rRNA processing.</text>
</comment>
<comment type="interaction">
    <interactant intactId="EBI-21138980">
        <id>Q8VYP6</id>
    </interactant>
    <interactant intactId="EBI-541366">
        <id>Q39234</id>
        <label>TGA3</label>
    </interactant>
    <organismsDiffer>false</organismsDiffer>
    <experiments>3</experiments>
</comment>
<comment type="interaction">
    <interactant intactId="EBI-21138980">
        <id>Q8VYP6</id>
    </interactant>
    <interactant intactId="EBI-15202502">
        <id>Q8H0Y8</id>
        <label>WRKY41</label>
    </interactant>
    <organismsDiffer>false</organismsDiffer>
    <experiments>3</experiments>
</comment>
<comment type="subcellular location">
    <subcellularLocation>
        <location evidence="1">Nucleus</location>
        <location evidence="1">Nucleolus</location>
    </subcellularLocation>
</comment>
<comment type="alternative products">
    <event type="alternative splicing"/>
    <isoform>
        <id>Q8VYP6-1</id>
        <name>1</name>
        <sequence type="displayed"/>
    </isoform>
    <isoform>
        <id>Q8VYP6-2</id>
        <name>2</name>
        <sequence type="described" ref="VSP_040448 VSP_040449"/>
    </isoform>
</comment>
<comment type="similarity">
    <text evidence="4">Belongs to the Clp1 family. NOL9/GRC3 subfamily.</text>
</comment>
<comment type="sequence caution" evidence="4">
    <conflict type="erroneous gene model prediction">
        <sequence resource="EMBL-CDS" id="CAB96856"/>
    </conflict>
</comment>
<protein>
    <recommendedName>
        <fullName>Polynucleotide 5'-hydroxyl-kinase NOL9</fullName>
        <ecNumber>2.7.1.-</ecNumber>
    </recommendedName>
    <alternativeName>
        <fullName>Nucleolar protein 9 homolog</fullName>
    </alternativeName>
</protein>
<name>NOL9_ARATH</name>